<evidence type="ECO:0000255" key="1">
    <source>
        <dbReference type="HAMAP-Rule" id="MF_00170"/>
    </source>
</evidence>
<feature type="chain" id="PRO_0000158389" description="Ribose-5-phosphate isomerase A">
    <location>
        <begin position="1"/>
        <end position="234"/>
    </location>
</feature>
<feature type="active site" description="Proton acceptor" evidence="1">
    <location>
        <position position="105"/>
    </location>
</feature>
<feature type="binding site" evidence="1">
    <location>
        <begin position="28"/>
        <end position="31"/>
    </location>
    <ligand>
        <name>substrate</name>
    </ligand>
</feature>
<feature type="binding site" evidence="1">
    <location>
        <begin position="83"/>
        <end position="86"/>
    </location>
    <ligand>
        <name>substrate</name>
    </ligand>
</feature>
<feature type="binding site" evidence="1">
    <location>
        <begin position="96"/>
        <end position="99"/>
    </location>
    <ligand>
        <name>substrate</name>
    </ligand>
</feature>
<feature type="binding site" evidence="1">
    <location>
        <position position="123"/>
    </location>
    <ligand>
        <name>substrate</name>
    </ligand>
</feature>
<name>RPIA_BARQU</name>
<accession>Q6FZP1</accession>
<proteinExistence type="inferred from homology"/>
<sequence length="234" mass="25255">MNVQQLKKRAAAKALEFVQDDMRLGIGTGSTANEFIRLLGERVADGLRVTGVATSQYSEQLCRKFGVPVTTLEQMPELDLDIDGADEIGPEMTLIKGGGGALWREKIVAAASRAMLVIADETKVVKTLGAFALPIEVNPFGMPATRRLIEKVADDLGLSGEIILRMNGENPFKTDGGHFIFDAFWGCILQPRLLSEALLAIPGVVEHGLFWGLASRAIVAMADGQIKVLESSDF</sequence>
<protein>
    <recommendedName>
        <fullName evidence="1">Ribose-5-phosphate isomerase A</fullName>
        <ecNumber evidence="1">5.3.1.6</ecNumber>
    </recommendedName>
    <alternativeName>
        <fullName evidence="1">Phosphoriboisomerase A</fullName>
        <shortName evidence="1">PRI</shortName>
    </alternativeName>
</protein>
<gene>
    <name evidence="1" type="primary">rpiA</name>
    <name type="ordered locus">BQ06820</name>
</gene>
<organism>
    <name type="scientific">Bartonella quintana (strain Toulouse)</name>
    <name type="common">Rochalimaea quintana</name>
    <dbReference type="NCBI Taxonomy" id="283165"/>
    <lineage>
        <taxon>Bacteria</taxon>
        <taxon>Pseudomonadati</taxon>
        <taxon>Pseudomonadota</taxon>
        <taxon>Alphaproteobacteria</taxon>
        <taxon>Hyphomicrobiales</taxon>
        <taxon>Bartonellaceae</taxon>
        <taxon>Bartonella</taxon>
    </lineage>
</organism>
<reference key="1">
    <citation type="journal article" date="2004" name="Proc. Natl. Acad. Sci. U.S.A.">
        <title>The louse-borne human pathogen Bartonella quintana is a genomic derivative of the zoonotic agent Bartonella henselae.</title>
        <authorList>
            <person name="Alsmark U.C.M."/>
            <person name="Frank A.C."/>
            <person name="Karlberg E.O."/>
            <person name="Legault B.-A."/>
            <person name="Ardell D.H."/>
            <person name="Canbaeck B."/>
            <person name="Eriksson A.-S."/>
            <person name="Naeslund A.K."/>
            <person name="Handley S.A."/>
            <person name="Huvet M."/>
            <person name="La Scola B."/>
            <person name="Holmberg M."/>
            <person name="Andersson S.G.E."/>
        </authorList>
    </citation>
    <scope>NUCLEOTIDE SEQUENCE [LARGE SCALE GENOMIC DNA]</scope>
    <source>
        <strain>Toulouse</strain>
    </source>
</reference>
<keyword id="KW-0413">Isomerase</keyword>
<dbReference type="EC" id="5.3.1.6" evidence="1"/>
<dbReference type="EMBL" id="BX897700">
    <property type="protein sequence ID" value="CAF26171.1"/>
    <property type="molecule type" value="Genomic_DNA"/>
</dbReference>
<dbReference type="RefSeq" id="WP_011179426.1">
    <property type="nucleotide sequence ID" value="NC_005955.1"/>
</dbReference>
<dbReference type="SMR" id="Q6FZP1"/>
<dbReference type="KEGG" id="bqu:BQ06820"/>
<dbReference type="eggNOG" id="COG0120">
    <property type="taxonomic scope" value="Bacteria"/>
</dbReference>
<dbReference type="HOGENOM" id="CLU_056590_1_0_5"/>
<dbReference type="OrthoDB" id="5870696at2"/>
<dbReference type="UniPathway" id="UPA00115">
    <property type="reaction ID" value="UER00412"/>
</dbReference>
<dbReference type="Proteomes" id="UP000000597">
    <property type="component" value="Chromosome"/>
</dbReference>
<dbReference type="GO" id="GO:0005829">
    <property type="term" value="C:cytosol"/>
    <property type="evidence" value="ECO:0007669"/>
    <property type="project" value="TreeGrafter"/>
</dbReference>
<dbReference type="GO" id="GO:0004751">
    <property type="term" value="F:ribose-5-phosphate isomerase activity"/>
    <property type="evidence" value="ECO:0007669"/>
    <property type="project" value="UniProtKB-UniRule"/>
</dbReference>
<dbReference type="GO" id="GO:0006014">
    <property type="term" value="P:D-ribose metabolic process"/>
    <property type="evidence" value="ECO:0007669"/>
    <property type="project" value="TreeGrafter"/>
</dbReference>
<dbReference type="GO" id="GO:0009052">
    <property type="term" value="P:pentose-phosphate shunt, non-oxidative branch"/>
    <property type="evidence" value="ECO:0007669"/>
    <property type="project" value="UniProtKB-UniRule"/>
</dbReference>
<dbReference type="CDD" id="cd01398">
    <property type="entry name" value="RPI_A"/>
    <property type="match status" value="1"/>
</dbReference>
<dbReference type="FunFam" id="3.40.50.1360:FF:000001">
    <property type="entry name" value="Ribose-5-phosphate isomerase A"/>
    <property type="match status" value="1"/>
</dbReference>
<dbReference type="Gene3D" id="3.30.70.260">
    <property type="match status" value="1"/>
</dbReference>
<dbReference type="Gene3D" id="3.40.50.1360">
    <property type="match status" value="1"/>
</dbReference>
<dbReference type="HAMAP" id="MF_00170">
    <property type="entry name" value="Rib_5P_isom_A"/>
    <property type="match status" value="1"/>
</dbReference>
<dbReference type="InterPro" id="IPR037171">
    <property type="entry name" value="NagB/RpiA_transferase-like"/>
</dbReference>
<dbReference type="InterPro" id="IPR020672">
    <property type="entry name" value="Ribose5P_isomerase_typA_subgr"/>
</dbReference>
<dbReference type="InterPro" id="IPR004788">
    <property type="entry name" value="Ribose5P_isomerase_type_A"/>
</dbReference>
<dbReference type="NCBIfam" id="NF001924">
    <property type="entry name" value="PRK00702.1"/>
    <property type="match status" value="1"/>
</dbReference>
<dbReference type="NCBIfam" id="TIGR00021">
    <property type="entry name" value="rpiA"/>
    <property type="match status" value="1"/>
</dbReference>
<dbReference type="PANTHER" id="PTHR11934">
    <property type="entry name" value="RIBOSE-5-PHOSPHATE ISOMERASE"/>
    <property type="match status" value="1"/>
</dbReference>
<dbReference type="PANTHER" id="PTHR11934:SF0">
    <property type="entry name" value="RIBOSE-5-PHOSPHATE ISOMERASE"/>
    <property type="match status" value="1"/>
</dbReference>
<dbReference type="Pfam" id="PF06026">
    <property type="entry name" value="Rib_5-P_isom_A"/>
    <property type="match status" value="1"/>
</dbReference>
<dbReference type="SUPFAM" id="SSF75445">
    <property type="entry name" value="D-ribose-5-phosphate isomerase (RpiA), lid domain"/>
    <property type="match status" value="1"/>
</dbReference>
<dbReference type="SUPFAM" id="SSF100950">
    <property type="entry name" value="NagB/RpiA/CoA transferase-like"/>
    <property type="match status" value="1"/>
</dbReference>
<comment type="function">
    <text evidence="1">Catalyzes the reversible conversion of ribose-5-phosphate to ribulose 5-phosphate.</text>
</comment>
<comment type="catalytic activity">
    <reaction evidence="1">
        <text>aldehydo-D-ribose 5-phosphate = D-ribulose 5-phosphate</text>
        <dbReference type="Rhea" id="RHEA:14657"/>
        <dbReference type="ChEBI" id="CHEBI:58121"/>
        <dbReference type="ChEBI" id="CHEBI:58273"/>
        <dbReference type="EC" id="5.3.1.6"/>
    </reaction>
</comment>
<comment type="pathway">
    <text evidence="1">Carbohydrate degradation; pentose phosphate pathway; D-ribose 5-phosphate from D-ribulose 5-phosphate (non-oxidative stage): step 1/1.</text>
</comment>
<comment type="subunit">
    <text evidence="1">Homodimer.</text>
</comment>
<comment type="similarity">
    <text evidence="1">Belongs to the ribose 5-phosphate isomerase family.</text>
</comment>